<keyword id="KW-0106">Calcium</keyword>
<keyword id="KW-0148">Chlorophyll</keyword>
<keyword id="KW-0157">Chromophore</keyword>
<keyword id="KW-0249">Electron transport</keyword>
<keyword id="KW-0359">Herbicide resistance</keyword>
<keyword id="KW-0408">Iron</keyword>
<keyword id="KW-0460">Magnesium</keyword>
<keyword id="KW-0464">Manganese</keyword>
<keyword id="KW-0472">Membrane</keyword>
<keyword id="KW-0479">Metal-binding</keyword>
<keyword id="KW-0560">Oxidoreductase</keyword>
<keyword id="KW-0602">Photosynthesis</keyword>
<keyword id="KW-0604">Photosystem II</keyword>
<keyword id="KW-0793">Thylakoid</keyword>
<keyword id="KW-0812">Transmembrane</keyword>
<keyword id="KW-1133">Transmembrane helix</keyword>
<keyword id="KW-0813">Transport</keyword>
<dbReference type="EC" id="1.10.3.9" evidence="1"/>
<dbReference type="EMBL" id="K02074">
    <property type="protein sequence ID" value="AAA24891.1"/>
    <property type="molecule type" value="Genomic_DNA"/>
</dbReference>
<dbReference type="PIR" id="A20978">
    <property type="entry name" value="A20978"/>
</dbReference>
<dbReference type="SMR" id="P07063"/>
<dbReference type="GO" id="GO:0009523">
    <property type="term" value="C:photosystem II"/>
    <property type="evidence" value="ECO:0007669"/>
    <property type="project" value="UniProtKB-KW"/>
</dbReference>
<dbReference type="GO" id="GO:0031676">
    <property type="term" value="C:plasma membrane-derived thylakoid membrane"/>
    <property type="evidence" value="ECO:0007669"/>
    <property type="project" value="UniProtKB-SubCell"/>
</dbReference>
<dbReference type="GO" id="GO:0016168">
    <property type="term" value="F:chlorophyll binding"/>
    <property type="evidence" value="ECO:0007669"/>
    <property type="project" value="UniProtKB-UniRule"/>
</dbReference>
<dbReference type="GO" id="GO:0045156">
    <property type="term" value="F:electron transporter, transferring electrons within the cyclic electron transport pathway of photosynthesis activity"/>
    <property type="evidence" value="ECO:0007669"/>
    <property type="project" value="InterPro"/>
</dbReference>
<dbReference type="GO" id="GO:0005506">
    <property type="term" value="F:iron ion binding"/>
    <property type="evidence" value="ECO:0007669"/>
    <property type="project" value="UniProtKB-UniRule"/>
</dbReference>
<dbReference type="GO" id="GO:0016682">
    <property type="term" value="F:oxidoreductase activity, acting on diphenols and related substances as donors, oxygen as acceptor"/>
    <property type="evidence" value="ECO:0007669"/>
    <property type="project" value="UniProtKB-UniRule"/>
</dbReference>
<dbReference type="GO" id="GO:0010242">
    <property type="term" value="F:oxygen evolving activity"/>
    <property type="evidence" value="ECO:0007669"/>
    <property type="project" value="UniProtKB-EC"/>
</dbReference>
<dbReference type="GO" id="GO:0009772">
    <property type="term" value="P:photosynthetic electron transport in photosystem II"/>
    <property type="evidence" value="ECO:0007669"/>
    <property type="project" value="InterPro"/>
</dbReference>
<dbReference type="GO" id="GO:0009635">
    <property type="term" value="P:response to herbicide"/>
    <property type="evidence" value="ECO:0007669"/>
    <property type="project" value="UniProtKB-KW"/>
</dbReference>
<dbReference type="CDD" id="cd09289">
    <property type="entry name" value="Photosystem-II_D1"/>
    <property type="match status" value="1"/>
</dbReference>
<dbReference type="FunFam" id="1.20.85.10:FF:000002">
    <property type="entry name" value="Photosystem II protein D1"/>
    <property type="match status" value="1"/>
</dbReference>
<dbReference type="Gene3D" id="1.20.85.10">
    <property type="entry name" value="Photosystem II protein D1-like"/>
    <property type="match status" value="1"/>
</dbReference>
<dbReference type="HAMAP" id="MF_01379">
    <property type="entry name" value="PSII_PsbA_D1"/>
    <property type="match status" value="1"/>
</dbReference>
<dbReference type="InterPro" id="IPR055266">
    <property type="entry name" value="D1/D2"/>
</dbReference>
<dbReference type="InterPro" id="IPR036854">
    <property type="entry name" value="Photo_II_D1/D2_sf"/>
</dbReference>
<dbReference type="InterPro" id="IPR000484">
    <property type="entry name" value="Photo_RC_L/M"/>
</dbReference>
<dbReference type="InterPro" id="IPR055265">
    <property type="entry name" value="Photo_RC_L/M_CS"/>
</dbReference>
<dbReference type="InterPro" id="IPR005867">
    <property type="entry name" value="PSII_D1"/>
</dbReference>
<dbReference type="NCBIfam" id="TIGR01151">
    <property type="entry name" value="psbA"/>
    <property type="match status" value="1"/>
</dbReference>
<dbReference type="PANTHER" id="PTHR33149:SF12">
    <property type="entry name" value="PHOTOSYSTEM II D2 PROTEIN"/>
    <property type="match status" value="1"/>
</dbReference>
<dbReference type="PANTHER" id="PTHR33149">
    <property type="entry name" value="PHOTOSYSTEM II PROTEIN D1"/>
    <property type="match status" value="1"/>
</dbReference>
<dbReference type="Pfam" id="PF00124">
    <property type="entry name" value="Photo_RC"/>
    <property type="match status" value="1"/>
</dbReference>
<dbReference type="PRINTS" id="PR00256">
    <property type="entry name" value="REACTNCENTRE"/>
</dbReference>
<dbReference type="SUPFAM" id="SSF81483">
    <property type="entry name" value="Bacterial photosystem II reaction centre, L and M subunits"/>
    <property type="match status" value="1"/>
</dbReference>
<dbReference type="PROSITE" id="PS00244">
    <property type="entry name" value="REACTION_CENTER"/>
    <property type="match status" value="1"/>
</dbReference>
<protein>
    <recommendedName>
        <fullName evidence="1">Photosystem II protein D1</fullName>
        <shortName evidence="1">PSII D1 protein</shortName>
        <ecNumber evidence="1">1.10.3.9</ecNumber>
    </recommendedName>
    <alternativeName>
        <fullName evidence="1">Photosystem II Q(B) protein</fullName>
    </alternativeName>
</protein>
<name>PSBA_MICDP</name>
<reference key="1">
    <citation type="journal article" date="1984" name="Proc. Natl. Acad. Sci. U.S.A.">
        <title>Nucleotide sequence of a multiple-copy gene for the B protein of photosystem II of a cyanobacterium.</title>
        <authorList>
            <person name="Mulligan B."/>
            <person name="Schultes N."/>
            <person name="Chen L."/>
            <person name="Bogorad L."/>
        </authorList>
    </citation>
    <scope>NUCLEOTIDE SEQUENCE [GENOMIC DNA]</scope>
</reference>
<proteinExistence type="inferred from homology"/>
<accession>P07063</accession>
<evidence type="ECO:0000255" key="1">
    <source>
        <dbReference type="HAMAP-Rule" id="MF_01379"/>
    </source>
</evidence>
<comment type="function">
    <text evidence="1">Photosystem II (PSII) is a light-driven water:plastoquinone oxidoreductase that uses light energy to abstract electrons from H(2)O, generating O(2) and a proton gradient subsequently used for ATP formation. It consists of a core antenna complex that captures photons, and an electron transfer chain that converts photonic excitation into a charge separation. The D1/D2 (PsbA/PsbD) reaction center heterodimer binds P680, the primary electron donor of PSII as well as several subsequent electron acceptors.</text>
</comment>
<comment type="catalytic activity">
    <reaction evidence="1">
        <text>2 a plastoquinone + 4 hnu + 2 H2O = 2 a plastoquinol + O2</text>
        <dbReference type="Rhea" id="RHEA:36359"/>
        <dbReference type="Rhea" id="RHEA-COMP:9561"/>
        <dbReference type="Rhea" id="RHEA-COMP:9562"/>
        <dbReference type="ChEBI" id="CHEBI:15377"/>
        <dbReference type="ChEBI" id="CHEBI:15379"/>
        <dbReference type="ChEBI" id="CHEBI:17757"/>
        <dbReference type="ChEBI" id="CHEBI:30212"/>
        <dbReference type="ChEBI" id="CHEBI:62192"/>
        <dbReference type="EC" id="1.10.3.9"/>
    </reaction>
</comment>
<comment type="cofactor">
    <text evidence="1">The D1/D2 heterodimer binds P680, chlorophylls that are the primary electron donor of PSII, and subsequent electron acceptors. It shares a non-heme iron and each subunit binds pheophytin, quinone, additional chlorophylls, carotenoids and lipids. D1 provides most of the ligands for the Mn4-Ca-O5 cluster of the oxygen-evolving complex (OEC). There is also a Cl(-1) ion associated with D1 and D2, which is required for oxygen evolution. The PSII complex binds additional chlorophylls, carotenoids and specific lipids.</text>
</comment>
<comment type="subunit">
    <text evidence="1">PSII is composed of 1 copy each of membrane proteins PsbA, PsbB, PsbC, PsbD, PsbE, PsbF, PsbH, PsbI, PsbJ, PsbK, PsbL, PsbM, PsbT, PsbX, PsbY, PsbZ, Psb30/Ycf12, peripheral proteins PsbO, CyanoQ (PsbQ), PsbU, PsbV and a large number of cofactors. It forms dimeric complexes.</text>
</comment>
<comment type="subcellular location">
    <subcellularLocation>
        <location evidence="1">Cellular thylakoid membrane</location>
        <topology evidence="1">Multi-pass membrane protein</topology>
    </subcellularLocation>
</comment>
<comment type="PTM">
    <text evidence="1">Tyr-161 forms a radical intermediate that is referred to as redox-active TyrZ, YZ or Y-Z.</text>
</comment>
<comment type="PTM">
    <text evidence="1">C-terminally processed by CtpA; processing is essential to allow assembly of the oxygen-evolving complex and thus photosynthetic growth.</text>
</comment>
<comment type="miscellaneous">
    <text evidence="1">Cyanobacteria usually contain more than 2 copies of the psbA gene.</text>
</comment>
<comment type="miscellaneous">
    <text evidence="1">2 of the reaction center chlorophylls (ChlD1 and ChlD2) are entirely coordinated by water.</text>
</comment>
<comment type="miscellaneous">
    <text evidence="1">Herbicides such as atrazine, BNT, diuron or ioxynil bind in the Q(B) binding site and block subsequent electron transfer.</text>
</comment>
<comment type="similarity">
    <text evidence="1">Belongs to the reaction center PufL/M/PsbA/D family.</text>
</comment>
<organism>
    <name type="scientific">Microchaete diplosiphon</name>
    <name type="common">Fremyella diplosiphon</name>
    <dbReference type="NCBI Taxonomy" id="1197"/>
    <lineage>
        <taxon>Bacteria</taxon>
        <taxon>Bacillati</taxon>
        <taxon>Cyanobacteriota</taxon>
        <taxon>Cyanophyceae</taxon>
        <taxon>Nostocales</taxon>
        <taxon>Rivulariaceae</taxon>
        <taxon>Microchaete</taxon>
    </lineage>
</organism>
<gene>
    <name evidence="1" type="primary">psbA</name>
    <name type="synonym">ps2B-1</name>
</gene>
<sequence>MTTTLQQRSRASVWDRFCEWITSTENRIYIGWFGVLMIPTLLAATACFVIAFIAAPPVDIDGIREPVAGSLIYGNNIISGAVVPSSNAIGLHFYPIWEAASLDEWLYNGGPYQLVIFHFLLGCACYLGRQWELSYRLGMRPWICVAYSAPLASATAVFLIYPIGQGSFSDGMPLGISGTFNFMIVFQAEHNILLHPFHMLGVAGVFGGSLFSAMHGSLVTSSLVRETTETESQNYGYKFGQEEETYNIVAAHGYFGRLIFQYASFNNSRSLHFFLAAWPVVGIWFTALGVSTMAFNLNGFNFNQSVIDSQGRVIATWADVINRANLGMEVMHERNAHNFPLDLAAGEVAPVALTAPAING</sequence>
<feature type="chain" id="PRO_0000090481" description="Photosystem II protein D1" evidence="1">
    <location>
        <begin position="1"/>
        <end position="344"/>
    </location>
</feature>
<feature type="propeptide" id="PRO_0000316344" evidence="1">
    <location>
        <begin position="345"/>
        <end position="360"/>
    </location>
</feature>
<feature type="transmembrane region" description="Helical" evidence="1">
    <location>
        <begin position="29"/>
        <end position="46"/>
    </location>
</feature>
<feature type="transmembrane region" description="Helical" evidence="1">
    <location>
        <begin position="118"/>
        <end position="133"/>
    </location>
</feature>
<feature type="transmembrane region" description="Helical" evidence="1">
    <location>
        <begin position="142"/>
        <end position="156"/>
    </location>
</feature>
<feature type="transmembrane region" description="Helical" evidence="1">
    <location>
        <begin position="197"/>
        <end position="218"/>
    </location>
</feature>
<feature type="transmembrane region" description="Helical" evidence="1">
    <location>
        <begin position="274"/>
        <end position="288"/>
    </location>
</feature>
<feature type="binding site" description="axial binding residue" evidence="1">
    <location>
        <position position="118"/>
    </location>
    <ligand>
        <name>chlorophyll a</name>
        <dbReference type="ChEBI" id="CHEBI:58416"/>
        <label>ChlzD1</label>
    </ligand>
    <ligandPart>
        <name>Mg</name>
        <dbReference type="ChEBI" id="CHEBI:25107"/>
    </ligandPart>
</feature>
<feature type="binding site" evidence="1">
    <location>
        <position position="126"/>
    </location>
    <ligand>
        <name>pheophytin a</name>
        <dbReference type="ChEBI" id="CHEBI:136840"/>
        <label>D1</label>
    </ligand>
</feature>
<feature type="binding site" evidence="1">
    <location>
        <position position="170"/>
    </location>
    <ligand>
        <name>[CaMn4O5] cluster</name>
        <dbReference type="ChEBI" id="CHEBI:189552"/>
    </ligand>
</feature>
<feature type="binding site" evidence="1">
    <location>
        <position position="189"/>
    </location>
    <ligand>
        <name>[CaMn4O5] cluster</name>
        <dbReference type="ChEBI" id="CHEBI:189552"/>
    </ligand>
</feature>
<feature type="binding site" description="axial binding residue" evidence="1">
    <location>
        <position position="198"/>
    </location>
    <ligand>
        <name>chlorophyll a</name>
        <dbReference type="ChEBI" id="CHEBI:58416"/>
        <label>PD1</label>
    </ligand>
    <ligandPart>
        <name>Mg</name>
        <dbReference type="ChEBI" id="CHEBI:25107"/>
    </ligandPart>
</feature>
<feature type="binding site" evidence="1">
    <location>
        <position position="215"/>
    </location>
    <ligand>
        <name>a quinone</name>
        <dbReference type="ChEBI" id="CHEBI:132124"/>
        <label>B</label>
    </ligand>
</feature>
<feature type="binding site" evidence="1">
    <location>
        <position position="215"/>
    </location>
    <ligand>
        <name>Fe cation</name>
        <dbReference type="ChEBI" id="CHEBI:24875"/>
        <note>ligand shared with heterodimeric partner</note>
    </ligand>
</feature>
<feature type="binding site" evidence="1">
    <location>
        <begin position="264"/>
        <end position="265"/>
    </location>
    <ligand>
        <name>a quinone</name>
        <dbReference type="ChEBI" id="CHEBI:132124"/>
        <label>B</label>
    </ligand>
</feature>
<feature type="binding site" evidence="1">
    <location>
        <position position="272"/>
    </location>
    <ligand>
        <name>Fe cation</name>
        <dbReference type="ChEBI" id="CHEBI:24875"/>
        <note>ligand shared with heterodimeric partner</note>
    </ligand>
</feature>
<feature type="binding site" evidence="1">
    <location>
        <position position="332"/>
    </location>
    <ligand>
        <name>[CaMn4O5] cluster</name>
        <dbReference type="ChEBI" id="CHEBI:189552"/>
    </ligand>
</feature>
<feature type="binding site" evidence="1">
    <location>
        <position position="333"/>
    </location>
    <ligand>
        <name>[CaMn4O5] cluster</name>
        <dbReference type="ChEBI" id="CHEBI:189552"/>
    </ligand>
</feature>
<feature type="binding site" evidence="1">
    <location>
        <position position="342"/>
    </location>
    <ligand>
        <name>[CaMn4O5] cluster</name>
        <dbReference type="ChEBI" id="CHEBI:189552"/>
    </ligand>
</feature>
<feature type="binding site" evidence="1">
    <location>
        <position position="344"/>
    </location>
    <ligand>
        <name>[CaMn4O5] cluster</name>
        <dbReference type="ChEBI" id="CHEBI:189552"/>
    </ligand>
</feature>
<feature type="site" description="Tyrosine radical intermediate" evidence="1">
    <location>
        <position position="161"/>
    </location>
</feature>
<feature type="site" description="Stabilizes free radical intermediate" evidence="1">
    <location>
        <position position="190"/>
    </location>
</feature>
<feature type="site" description="Cleavage; by CtpA" evidence="1">
    <location>
        <begin position="344"/>
        <end position="345"/>
    </location>
</feature>